<gene>
    <name evidence="11" type="primary">DCTN4</name>
</gene>
<dbReference type="EMBL" id="AF195120">
    <property type="protein sequence ID" value="AAF03896.1"/>
    <property type="molecule type" value="mRNA"/>
</dbReference>
<dbReference type="EMBL" id="AK125973">
    <property type="protein sequence ID" value="BAG54272.1"/>
    <property type="molecule type" value="mRNA"/>
</dbReference>
<dbReference type="EMBL" id="AK000299">
    <property type="protein sequence ID" value="BAA91066.1"/>
    <property type="molecule type" value="mRNA"/>
</dbReference>
<dbReference type="EMBL" id="AC008450">
    <property type="status" value="NOT_ANNOTATED_CDS"/>
    <property type="molecule type" value="Genomic_DNA"/>
</dbReference>
<dbReference type="EMBL" id="AC008453">
    <property type="status" value="NOT_ANNOTATED_CDS"/>
    <property type="molecule type" value="Genomic_DNA"/>
</dbReference>
<dbReference type="EMBL" id="CH471062">
    <property type="protein sequence ID" value="EAW61706.1"/>
    <property type="molecule type" value="Genomic_DNA"/>
</dbReference>
<dbReference type="EMBL" id="CH471062">
    <property type="protein sequence ID" value="EAW61707.1"/>
    <property type="molecule type" value="Genomic_DNA"/>
</dbReference>
<dbReference type="EMBL" id="CH471062">
    <property type="protein sequence ID" value="EAW61709.1"/>
    <property type="molecule type" value="Genomic_DNA"/>
</dbReference>
<dbReference type="EMBL" id="BC026323">
    <property type="protein sequence ID" value="AAH26323.1"/>
    <property type="molecule type" value="mRNA"/>
</dbReference>
<dbReference type="CCDS" id="CCDS4310.1">
    <molecule id="Q9UJW0-1"/>
</dbReference>
<dbReference type="CCDS" id="CCDS47310.1">
    <molecule id="Q9UJW0-3"/>
</dbReference>
<dbReference type="CCDS" id="CCDS47311.1">
    <molecule id="Q9UJW0-2"/>
</dbReference>
<dbReference type="RefSeq" id="NP_001129115.1">
    <molecule id="Q9UJW0-3"/>
    <property type="nucleotide sequence ID" value="NM_001135643.2"/>
</dbReference>
<dbReference type="RefSeq" id="NP_001129116.1">
    <molecule id="Q9UJW0-2"/>
    <property type="nucleotide sequence ID" value="NM_001135644.2"/>
</dbReference>
<dbReference type="RefSeq" id="NP_057305.1">
    <molecule id="Q9UJW0-1"/>
    <property type="nucleotide sequence ID" value="NM_016221.4"/>
</dbReference>
<dbReference type="RefSeq" id="XP_011535946.1">
    <molecule id="Q9UJW0-2"/>
    <property type="nucleotide sequence ID" value="XM_011537644.2"/>
</dbReference>
<dbReference type="RefSeq" id="XP_011535947.1">
    <molecule id="Q9UJW0-2"/>
    <property type="nucleotide sequence ID" value="XM_011537645.2"/>
</dbReference>
<dbReference type="RefSeq" id="XP_047273217.1">
    <molecule id="Q9UJW0-2"/>
    <property type="nucleotide sequence ID" value="XM_047417261.1"/>
</dbReference>
<dbReference type="RefSeq" id="XP_054208692.1">
    <molecule id="Q9UJW0-2"/>
    <property type="nucleotide sequence ID" value="XM_054352717.1"/>
</dbReference>
<dbReference type="SMR" id="Q9UJW0"/>
<dbReference type="BioGRID" id="119345">
    <property type="interactions" value="161"/>
</dbReference>
<dbReference type="FunCoup" id="Q9UJW0">
    <property type="interactions" value="3994"/>
</dbReference>
<dbReference type="IntAct" id="Q9UJW0">
    <property type="interactions" value="65"/>
</dbReference>
<dbReference type="MINT" id="Q9UJW0"/>
<dbReference type="STRING" id="9606.ENSP00000414906"/>
<dbReference type="GlyGen" id="Q9UJW0">
    <property type="glycosylation" value="1 site, 1 O-linked glycan (1 site)"/>
</dbReference>
<dbReference type="iPTMnet" id="Q9UJW0"/>
<dbReference type="PhosphoSitePlus" id="Q9UJW0"/>
<dbReference type="BioMuta" id="DCTN4"/>
<dbReference type="DMDM" id="62900106"/>
<dbReference type="jPOST" id="Q9UJW0"/>
<dbReference type="MassIVE" id="Q9UJW0"/>
<dbReference type="PaxDb" id="9606-ENSP00000414906"/>
<dbReference type="PeptideAtlas" id="Q9UJW0"/>
<dbReference type="ProteomicsDB" id="84667">
    <molecule id="Q9UJW0-1"/>
</dbReference>
<dbReference type="ProteomicsDB" id="84668">
    <molecule id="Q9UJW0-2"/>
</dbReference>
<dbReference type="ProteomicsDB" id="84669">
    <molecule id="Q9UJW0-3"/>
</dbReference>
<dbReference type="Pumba" id="Q9UJW0"/>
<dbReference type="Antibodypedia" id="4309">
    <property type="antibodies" value="229 antibodies from 28 providers"/>
</dbReference>
<dbReference type="DNASU" id="51164"/>
<dbReference type="Ensembl" id="ENST00000424236.5">
    <molecule id="Q9UJW0-2"/>
    <property type="protein sequence ID" value="ENSP00000411251.1"/>
    <property type="gene ID" value="ENSG00000132912.14"/>
</dbReference>
<dbReference type="Ensembl" id="ENST00000446090.7">
    <molecule id="Q9UJW0-3"/>
    <property type="protein sequence ID" value="ENSP00000414906.2"/>
    <property type="gene ID" value="ENSG00000132912.14"/>
</dbReference>
<dbReference type="Ensembl" id="ENST00000447998.7">
    <molecule id="Q9UJW0-1"/>
    <property type="protein sequence ID" value="ENSP00000416968.2"/>
    <property type="gene ID" value="ENSG00000132912.14"/>
</dbReference>
<dbReference type="GeneID" id="51164"/>
<dbReference type="KEGG" id="hsa:51164"/>
<dbReference type="MANE-Select" id="ENST00000447998.7">
    <property type="protein sequence ID" value="ENSP00000416968.2"/>
    <property type="RefSeq nucleotide sequence ID" value="NM_016221.4"/>
    <property type="RefSeq protein sequence ID" value="NP_057305.1"/>
</dbReference>
<dbReference type="UCSC" id="uc003lsu.4">
    <molecule id="Q9UJW0-1"/>
    <property type="organism name" value="human"/>
</dbReference>
<dbReference type="AGR" id="HGNC:15518"/>
<dbReference type="CTD" id="51164"/>
<dbReference type="DisGeNET" id="51164"/>
<dbReference type="GeneCards" id="DCTN4"/>
<dbReference type="HGNC" id="HGNC:15518">
    <property type="gene designation" value="DCTN4"/>
</dbReference>
<dbReference type="HPA" id="ENSG00000132912">
    <property type="expression patterns" value="Low tissue specificity"/>
</dbReference>
<dbReference type="MalaCards" id="DCTN4"/>
<dbReference type="MIM" id="614758">
    <property type="type" value="gene"/>
</dbReference>
<dbReference type="neXtProt" id="NX_Q9UJW0"/>
<dbReference type="OpenTargets" id="ENSG00000132912"/>
<dbReference type="Orphanet" id="586">
    <property type="disease" value="Cystic fibrosis"/>
</dbReference>
<dbReference type="PharmGKB" id="PA27183"/>
<dbReference type="VEuPathDB" id="HostDB:ENSG00000132912"/>
<dbReference type="eggNOG" id="KOG3896">
    <property type="taxonomic scope" value="Eukaryota"/>
</dbReference>
<dbReference type="GeneTree" id="ENSGT00390000006954"/>
<dbReference type="HOGENOM" id="CLU_030384_0_0_1"/>
<dbReference type="InParanoid" id="Q9UJW0"/>
<dbReference type="OMA" id="KIYFCRH"/>
<dbReference type="OrthoDB" id="283815at2759"/>
<dbReference type="PAN-GO" id="Q9UJW0">
    <property type="GO annotations" value="1 GO annotation based on evolutionary models"/>
</dbReference>
<dbReference type="PhylomeDB" id="Q9UJW0"/>
<dbReference type="TreeFam" id="TF105249"/>
<dbReference type="PathwayCommons" id="Q9UJW0"/>
<dbReference type="Reactome" id="R-HSA-2132295">
    <property type="pathway name" value="MHC class II antigen presentation"/>
</dbReference>
<dbReference type="Reactome" id="R-HSA-3371497">
    <property type="pathway name" value="HSP90 chaperone cycle for steroid hormone receptors (SHR) in the presence of ligand"/>
</dbReference>
<dbReference type="Reactome" id="R-HSA-6807878">
    <property type="pathway name" value="COPI-mediated anterograde transport"/>
</dbReference>
<dbReference type="Reactome" id="R-HSA-6811436">
    <property type="pathway name" value="COPI-independent Golgi-to-ER retrograde traffic"/>
</dbReference>
<dbReference type="SignaLink" id="Q9UJW0"/>
<dbReference type="SIGNOR" id="Q9UJW0"/>
<dbReference type="BioGRID-ORCS" id="51164">
    <property type="hits" value="398 hits in 1164 CRISPR screens"/>
</dbReference>
<dbReference type="CD-CODE" id="FB4E32DD">
    <property type="entry name" value="Presynaptic clusters and postsynaptic densities"/>
</dbReference>
<dbReference type="ChiTaRS" id="DCTN4">
    <property type="organism name" value="human"/>
</dbReference>
<dbReference type="GenomeRNAi" id="51164"/>
<dbReference type="Pharos" id="Q9UJW0">
    <property type="development level" value="Tbio"/>
</dbReference>
<dbReference type="PRO" id="PR:Q9UJW0"/>
<dbReference type="Proteomes" id="UP000005640">
    <property type="component" value="Chromosome 5"/>
</dbReference>
<dbReference type="RNAct" id="Q9UJW0">
    <property type="molecule type" value="protein"/>
</dbReference>
<dbReference type="Bgee" id="ENSG00000132912">
    <property type="expression patterns" value="Expressed in biceps brachii and 202 other cell types or tissues"/>
</dbReference>
<dbReference type="ExpressionAtlas" id="Q9UJW0">
    <property type="expression patterns" value="baseline and differential"/>
</dbReference>
<dbReference type="GO" id="GO:0005938">
    <property type="term" value="C:cell cortex"/>
    <property type="evidence" value="ECO:0007669"/>
    <property type="project" value="UniProtKB-SubCell"/>
</dbReference>
<dbReference type="GO" id="GO:0005813">
    <property type="term" value="C:centrosome"/>
    <property type="evidence" value="ECO:0000314"/>
    <property type="project" value="UniProtKB"/>
</dbReference>
<dbReference type="GO" id="GO:0005737">
    <property type="term" value="C:cytoplasm"/>
    <property type="evidence" value="ECO:0000304"/>
    <property type="project" value="ProtInc"/>
</dbReference>
<dbReference type="GO" id="GO:0005868">
    <property type="term" value="C:cytoplasmic dynein complex"/>
    <property type="evidence" value="ECO:0007669"/>
    <property type="project" value="Ensembl"/>
</dbReference>
<dbReference type="GO" id="GO:0005829">
    <property type="term" value="C:cytosol"/>
    <property type="evidence" value="ECO:0000304"/>
    <property type="project" value="Reactome"/>
</dbReference>
<dbReference type="GO" id="GO:0005869">
    <property type="term" value="C:dynactin complex"/>
    <property type="evidence" value="ECO:0000318"/>
    <property type="project" value="GO_Central"/>
</dbReference>
<dbReference type="GO" id="GO:0005925">
    <property type="term" value="C:focal adhesion"/>
    <property type="evidence" value="ECO:0007669"/>
    <property type="project" value="Ensembl"/>
</dbReference>
<dbReference type="GO" id="GO:0000776">
    <property type="term" value="C:kinetochore"/>
    <property type="evidence" value="ECO:0007669"/>
    <property type="project" value="Ensembl"/>
</dbReference>
<dbReference type="GO" id="GO:0005634">
    <property type="term" value="C:nucleus"/>
    <property type="evidence" value="ECO:0000304"/>
    <property type="project" value="ProtInc"/>
</dbReference>
<dbReference type="GO" id="GO:0030017">
    <property type="term" value="C:sarcomere"/>
    <property type="evidence" value="ECO:0007669"/>
    <property type="project" value="UniProtKB-SubCell"/>
</dbReference>
<dbReference type="GO" id="GO:0000922">
    <property type="term" value="C:spindle pole"/>
    <property type="evidence" value="ECO:0007669"/>
    <property type="project" value="Ensembl"/>
</dbReference>
<dbReference type="GO" id="GO:0001725">
    <property type="term" value="C:stress fiber"/>
    <property type="evidence" value="ECO:0007669"/>
    <property type="project" value="UniProtKB-SubCell"/>
</dbReference>
<dbReference type="InterPro" id="IPR008603">
    <property type="entry name" value="DCTN4"/>
</dbReference>
<dbReference type="PANTHER" id="PTHR13034">
    <property type="entry name" value="DYNACTIN P62 SUBUNIT"/>
    <property type="match status" value="1"/>
</dbReference>
<dbReference type="PANTHER" id="PTHR13034:SF2">
    <property type="entry name" value="DYNACTIN SUBUNIT 4"/>
    <property type="match status" value="1"/>
</dbReference>
<dbReference type="Pfam" id="PF05502">
    <property type="entry name" value="Dynactin_p62"/>
    <property type="match status" value="2"/>
</dbReference>
<name>DCTN4_HUMAN</name>
<proteinExistence type="evidence at protein level"/>
<reference key="1">
    <citation type="journal article" date="2000" name="J. Biol. Chem.">
        <title>A dynactin subunit with a highly conserved cysteine-rich motif interacts directly with Arp1.</title>
        <authorList>
            <person name="Karki S."/>
            <person name="Tokito M.K."/>
            <person name="Holzbaur E.L.F."/>
        </authorList>
    </citation>
    <scope>NUCLEOTIDE SEQUENCE [MRNA] (ISOFORM 1)</scope>
    <scope>SUBUNIT</scope>
    <scope>SUBCELLULAR LOCATION</scope>
    <source>
        <tissue>Neuron</tissue>
    </source>
</reference>
<reference key="2">
    <citation type="journal article" date="2004" name="Nat. Genet.">
        <title>Complete sequencing and characterization of 21,243 full-length human cDNAs.</title>
        <authorList>
            <person name="Ota T."/>
            <person name="Suzuki Y."/>
            <person name="Nishikawa T."/>
            <person name="Otsuki T."/>
            <person name="Sugiyama T."/>
            <person name="Irie R."/>
            <person name="Wakamatsu A."/>
            <person name="Hayashi K."/>
            <person name="Sato H."/>
            <person name="Nagai K."/>
            <person name="Kimura K."/>
            <person name="Makita H."/>
            <person name="Sekine M."/>
            <person name="Obayashi M."/>
            <person name="Nishi T."/>
            <person name="Shibahara T."/>
            <person name="Tanaka T."/>
            <person name="Ishii S."/>
            <person name="Yamamoto J."/>
            <person name="Saito K."/>
            <person name="Kawai Y."/>
            <person name="Isono Y."/>
            <person name="Nakamura Y."/>
            <person name="Nagahari K."/>
            <person name="Murakami K."/>
            <person name="Yasuda T."/>
            <person name="Iwayanagi T."/>
            <person name="Wagatsuma M."/>
            <person name="Shiratori A."/>
            <person name="Sudo H."/>
            <person name="Hosoiri T."/>
            <person name="Kaku Y."/>
            <person name="Kodaira H."/>
            <person name="Kondo H."/>
            <person name="Sugawara M."/>
            <person name="Takahashi M."/>
            <person name="Kanda K."/>
            <person name="Yokoi T."/>
            <person name="Furuya T."/>
            <person name="Kikkawa E."/>
            <person name="Omura Y."/>
            <person name="Abe K."/>
            <person name="Kamihara K."/>
            <person name="Katsuta N."/>
            <person name="Sato K."/>
            <person name="Tanikawa M."/>
            <person name="Yamazaki M."/>
            <person name="Ninomiya K."/>
            <person name="Ishibashi T."/>
            <person name="Yamashita H."/>
            <person name="Murakawa K."/>
            <person name="Fujimori K."/>
            <person name="Tanai H."/>
            <person name="Kimata M."/>
            <person name="Watanabe M."/>
            <person name="Hiraoka S."/>
            <person name="Chiba Y."/>
            <person name="Ishida S."/>
            <person name="Ono Y."/>
            <person name="Takiguchi S."/>
            <person name="Watanabe S."/>
            <person name="Yosida M."/>
            <person name="Hotuta T."/>
            <person name="Kusano J."/>
            <person name="Kanehori K."/>
            <person name="Takahashi-Fujii A."/>
            <person name="Hara H."/>
            <person name="Tanase T.-O."/>
            <person name="Nomura Y."/>
            <person name="Togiya S."/>
            <person name="Komai F."/>
            <person name="Hara R."/>
            <person name="Takeuchi K."/>
            <person name="Arita M."/>
            <person name="Imose N."/>
            <person name="Musashino K."/>
            <person name="Yuuki H."/>
            <person name="Oshima A."/>
            <person name="Sasaki N."/>
            <person name="Aotsuka S."/>
            <person name="Yoshikawa Y."/>
            <person name="Matsunawa H."/>
            <person name="Ichihara T."/>
            <person name="Shiohata N."/>
            <person name="Sano S."/>
            <person name="Moriya S."/>
            <person name="Momiyama H."/>
            <person name="Satoh N."/>
            <person name="Takami S."/>
            <person name="Terashima Y."/>
            <person name="Suzuki O."/>
            <person name="Nakagawa S."/>
            <person name="Senoh A."/>
            <person name="Mizoguchi H."/>
            <person name="Goto Y."/>
            <person name="Shimizu F."/>
            <person name="Wakebe H."/>
            <person name="Hishigaki H."/>
            <person name="Watanabe T."/>
            <person name="Sugiyama A."/>
            <person name="Takemoto M."/>
            <person name="Kawakami B."/>
            <person name="Yamazaki M."/>
            <person name="Watanabe K."/>
            <person name="Kumagai A."/>
            <person name="Itakura S."/>
            <person name="Fukuzumi Y."/>
            <person name="Fujimori Y."/>
            <person name="Komiyama M."/>
            <person name="Tashiro H."/>
            <person name="Tanigami A."/>
            <person name="Fujiwara T."/>
            <person name="Ono T."/>
            <person name="Yamada K."/>
            <person name="Fujii Y."/>
            <person name="Ozaki K."/>
            <person name="Hirao M."/>
            <person name="Ohmori Y."/>
            <person name="Kawabata A."/>
            <person name="Hikiji T."/>
            <person name="Kobatake N."/>
            <person name="Inagaki H."/>
            <person name="Ikema Y."/>
            <person name="Okamoto S."/>
            <person name="Okitani R."/>
            <person name="Kawakami T."/>
            <person name="Noguchi S."/>
            <person name="Itoh T."/>
            <person name="Shigeta K."/>
            <person name="Senba T."/>
            <person name="Matsumura K."/>
            <person name="Nakajima Y."/>
            <person name="Mizuno T."/>
            <person name="Morinaga M."/>
            <person name="Sasaki M."/>
            <person name="Togashi T."/>
            <person name="Oyama M."/>
            <person name="Hata H."/>
            <person name="Watanabe M."/>
            <person name="Komatsu T."/>
            <person name="Mizushima-Sugano J."/>
            <person name="Satoh T."/>
            <person name="Shirai Y."/>
            <person name="Takahashi Y."/>
            <person name="Nakagawa K."/>
            <person name="Okumura K."/>
            <person name="Nagase T."/>
            <person name="Nomura N."/>
            <person name="Kikuchi H."/>
            <person name="Masuho Y."/>
            <person name="Yamashita R."/>
            <person name="Nakai K."/>
            <person name="Yada T."/>
            <person name="Nakamura Y."/>
            <person name="Ohara O."/>
            <person name="Isogai T."/>
            <person name="Sugano S."/>
        </authorList>
    </citation>
    <scope>NUCLEOTIDE SEQUENCE [LARGE SCALE MRNA] (ISOFORM 2)</scope>
    <scope>VARIANT LEU-342</scope>
    <source>
        <tissue>Testis</tissue>
    </source>
</reference>
<reference key="3">
    <citation type="journal article" date="2004" name="Nature">
        <title>The DNA sequence and comparative analysis of human chromosome 5.</title>
        <authorList>
            <person name="Schmutz J."/>
            <person name="Martin J."/>
            <person name="Terry A."/>
            <person name="Couronne O."/>
            <person name="Grimwood J."/>
            <person name="Lowry S."/>
            <person name="Gordon L.A."/>
            <person name="Scott D."/>
            <person name="Xie G."/>
            <person name="Huang W."/>
            <person name="Hellsten U."/>
            <person name="Tran-Gyamfi M."/>
            <person name="She X."/>
            <person name="Prabhakar S."/>
            <person name="Aerts A."/>
            <person name="Altherr M."/>
            <person name="Bajorek E."/>
            <person name="Black S."/>
            <person name="Branscomb E."/>
            <person name="Caoile C."/>
            <person name="Challacombe J.F."/>
            <person name="Chan Y.M."/>
            <person name="Denys M."/>
            <person name="Detter J.C."/>
            <person name="Escobar J."/>
            <person name="Flowers D."/>
            <person name="Fotopulos D."/>
            <person name="Glavina T."/>
            <person name="Gomez M."/>
            <person name="Gonzales E."/>
            <person name="Goodstein D."/>
            <person name="Grigoriev I."/>
            <person name="Groza M."/>
            <person name="Hammon N."/>
            <person name="Hawkins T."/>
            <person name="Haydu L."/>
            <person name="Israni S."/>
            <person name="Jett J."/>
            <person name="Kadner K."/>
            <person name="Kimball H."/>
            <person name="Kobayashi A."/>
            <person name="Lopez F."/>
            <person name="Lou Y."/>
            <person name="Martinez D."/>
            <person name="Medina C."/>
            <person name="Morgan J."/>
            <person name="Nandkeshwar R."/>
            <person name="Noonan J.P."/>
            <person name="Pitluck S."/>
            <person name="Pollard M."/>
            <person name="Predki P."/>
            <person name="Priest J."/>
            <person name="Ramirez L."/>
            <person name="Retterer J."/>
            <person name="Rodriguez A."/>
            <person name="Rogers S."/>
            <person name="Salamov A."/>
            <person name="Salazar A."/>
            <person name="Thayer N."/>
            <person name="Tice H."/>
            <person name="Tsai M."/>
            <person name="Ustaszewska A."/>
            <person name="Vo N."/>
            <person name="Wheeler J."/>
            <person name="Wu K."/>
            <person name="Yang J."/>
            <person name="Dickson M."/>
            <person name="Cheng J.-F."/>
            <person name="Eichler E.E."/>
            <person name="Olsen A."/>
            <person name="Pennacchio L.A."/>
            <person name="Rokhsar D.S."/>
            <person name="Richardson P."/>
            <person name="Lucas S.M."/>
            <person name="Myers R.M."/>
            <person name="Rubin E.M."/>
        </authorList>
    </citation>
    <scope>NUCLEOTIDE SEQUENCE [LARGE SCALE GENOMIC DNA]</scope>
</reference>
<reference key="4">
    <citation type="submission" date="2005-09" db="EMBL/GenBank/DDBJ databases">
        <authorList>
            <person name="Mural R.J."/>
            <person name="Istrail S."/>
            <person name="Sutton G.G."/>
            <person name="Florea L."/>
            <person name="Halpern A.L."/>
            <person name="Mobarry C.M."/>
            <person name="Lippert R."/>
            <person name="Walenz B."/>
            <person name="Shatkay H."/>
            <person name="Dew I."/>
            <person name="Miller J.R."/>
            <person name="Flanigan M.J."/>
            <person name="Edwards N.J."/>
            <person name="Bolanos R."/>
            <person name="Fasulo D."/>
            <person name="Halldorsson B.V."/>
            <person name="Hannenhalli S."/>
            <person name="Turner R."/>
            <person name="Yooseph S."/>
            <person name="Lu F."/>
            <person name="Nusskern D.R."/>
            <person name="Shue B.C."/>
            <person name="Zheng X.H."/>
            <person name="Zhong F."/>
            <person name="Delcher A.L."/>
            <person name="Huson D.H."/>
            <person name="Kravitz S.A."/>
            <person name="Mouchard L."/>
            <person name="Reinert K."/>
            <person name="Remington K.A."/>
            <person name="Clark A.G."/>
            <person name="Waterman M.S."/>
            <person name="Eichler E.E."/>
            <person name="Adams M.D."/>
            <person name="Hunkapiller M.W."/>
            <person name="Myers E.W."/>
            <person name="Venter J.C."/>
        </authorList>
    </citation>
    <scope>NUCLEOTIDE SEQUENCE [LARGE SCALE GENOMIC DNA]</scope>
</reference>
<reference key="5">
    <citation type="journal article" date="2004" name="Genome Res.">
        <title>The status, quality, and expansion of the NIH full-length cDNA project: the Mammalian Gene Collection (MGC).</title>
        <authorList>
            <consortium name="The MGC Project Team"/>
        </authorList>
    </citation>
    <scope>NUCLEOTIDE SEQUENCE [LARGE SCALE MRNA] (ISOFORM 1)</scope>
    <scope>VARIANT THR-95</scope>
    <source>
        <tissue>Brain</tissue>
    </source>
</reference>
<reference key="6">
    <citation type="journal article" date="2006" name="J. Biol. Chem.">
        <title>Copper-dependent interaction of dynactin subunit p62 with the N terminus of ATP7B but not ATP7A.</title>
        <authorList>
            <person name="Lim C.M."/>
            <person name="Cater M.A."/>
            <person name="Mercer J.F."/>
            <person name="La Fontaine S."/>
        </authorList>
    </citation>
    <scope>INTERACTION WITH ATP7B</scope>
    <scope>MUTAGENESIS OF CYS-30; CYS-33; CYS-51; CYS-54; CYS-70; CYS-73; CYS-76; CYS-79; CYS-111; CYS-114; CYS-277 AND CYS-280</scope>
</reference>
<reference key="7">
    <citation type="journal article" date="2009" name="Anal. Chem.">
        <title>Lys-N and trypsin cover complementary parts of the phosphoproteome in a refined SCX-based approach.</title>
        <authorList>
            <person name="Gauci S."/>
            <person name="Helbig A.O."/>
            <person name="Slijper M."/>
            <person name="Krijgsveld J."/>
            <person name="Heck A.J."/>
            <person name="Mohammed S."/>
        </authorList>
    </citation>
    <scope>ACETYLATION [LARGE SCALE ANALYSIS] AT ALA-2</scope>
    <scope>CLEAVAGE OF INITIATOR METHIONINE [LARGE SCALE ANALYSIS]</scope>
    <scope>IDENTIFICATION BY MASS SPECTROMETRY [LARGE SCALE ANALYSIS]</scope>
</reference>
<reference key="8">
    <citation type="journal article" date="2011" name="BMC Syst. Biol.">
        <title>Initial characterization of the human central proteome.</title>
        <authorList>
            <person name="Burkard T.R."/>
            <person name="Planyavsky M."/>
            <person name="Kaupe I."/>
            <person name="Breitwieser F.P."/>
            <person name="Buerckstuemmer T."/>
            <person name="Bennett K.L."/>
            <person name="Superti-Furga G."/>
            <person name="Colinge J."/>
        </authorList>
    </citation>
    <scope>IDENTIFICATION BY MASS SPECTROMETRY [LARGE SCALE ANALYSIS]</scope>
</reference>
<reference key="9">
    <citation type="journal article" date="2012" name="Mol. Cell. Proteomics">
        <title>Comparative large-scale characterisation of plant vs. mammal proteins reveals similar and idiosyncratic N-alpha acetylation features.</title>
        <authorList>
            <person name="Bienvenut W.V."/>
            <person name="Sumpton D."/>
            <person name="Martinez A."/>
            <person name="Lilla S."/>
            <person name="Espagne C."/>
            <person name="Meinnel T."/>
            <person name="Giglione C."/>
        </authorList>
    </citation>
    <scope>ACETYLATION [LARGE SCALE ANALYSIS] AT ALA-2</scope>
    <scope>CLEAVAGE OF INITIATOR METHIONINE [LARGE SCALE ANALYSIS]</scope>
    <scope>IDENTIFICATION BY MASS SPECTROMETRY [LARGE SCALE ANALYSIS]</scope>
</reference>
<reference key="10">
    <citation type="journal article" date="2012" name="Proc. Natl. Acad. Sci. U.S.A.">
        <title>N-terminal acetylome analyses and functional insights of the N-terminal acetyltransferase NatB.</title>
        <authorList>
            <person name="Van Damme P."/>
            <person name="Lasa M."/>
            <person name="Polevoda B."/>
            <person name="Gazquez C."/>
            <person name="Elosegui-Artola A."/>
            <person name="Kim D.S."/>
            <person name="De Juan-Pardo E."/>
            <person name="Demeyer K."/>
            <person name="Hole K."/>
            <person name="Larrea E."/>
            <person name="Timmerman E."/>
            <person name="Prieto J."/>
            <person name="Arnesen T."/>
            <person name="Sherman F."/>
            <person name="Gevaert K."/>
            <person name="Aldabe R."/>
        </authorList>
    </citation>
    <scope>ACETYLATION [LARGE SCALE ANALYSIS] AT ALA-2</scope>
    <scope>CLEAVAGE OF INITIATOR METHIONINE [LARGE SCALE ANALYSIS]</scope>
    <scope>IDENTIFICATION BY MASS SPECTROMETRY [LARGE SCALE ANALYSIS]</scope>
</reference>
<reference key="11">
    <citation type="journal article" date="2013" name="J. Proteome Res.">
        <title>Toward a comprehensive characterization of a human cancer cell phosphoproteome.</title>
        <authorList>
            <person name="Zhou H."/>
            <person name="Di Palma S."/>
            <person name="Preisinger C."/>
            <person name="Peng M."/>
            <person name="Polat A.N."/>
            <person name="Heck A.J."/>
            <person name="Mohammed S."/>
        </authorList>
    </citation>
    <scope>PHOSPHORYLATION [LARGE SCALE ANALYSIS] AT SER-196</scope>
    <scope>IDENTIFICATION BY MASS SPECTROMETRY [LARGE SCALE ANALYSIS]</scope>
    <source>
        <tissue>Erythroleukemia</tissue>
    </source>
</reference>
<reference key="12">
    <citation type="journal article" date="2017" name="Nat. Struct. Mol. Biol.">
        <title>Site-specific mapping of the human SUMO proteome reveals co-modification with phosphorylation.</title>
        <authorList>
            <person name="Hendriks I.A."/>
            <person name="Lyon D."/>
            <person name="Young C."/>
            <person name="Jensen L.J."/>
            <person name="Vertegaal A.C."/>
            <person name="Nielsen M.L."/>
        </authorList>
    </citation>
    <scope>SUMOYLATION [LARGE SCALE ANALYSIS] AT LYS-215</scope>
    <scope>IDENTIFICATION BY MASS SPECTROMETRY [LARGE SCALE ANALYSIS]</scope>
</reference>
<keyword id="KW-0007">Acetylation</keyword>
<keyword id="KW-0025">Alternative splicing</keyword>
<keyword id="KW-0175">Coiled coil</keyword>
<keyword id="KW-0963">Cytoplasm</keyword>
<keyword id="KW-0206">Cytoskeleton</keyword>
<keyword id="KW-1017">Isopeptide bond</keyword>
<keyword id="KW-0597">Phosphoprotein</keyword>
<keyword id="KW-1267">Proteomics identification</keyword>
<keyword id="KW-1185">Reference proteome</keyword>
<keyword id="KW-0832">Ubl conjugation</keyword>
<evidence type="ECO:0000250" key="1">
    <source>
        <dbReference type="UniProtKB" id="A0A4X1TB62"/>
    </source>
</evidence>
<evidence type="ECO:0000250" key="2">
    <source>
        <dbReference type="UniProtKB" id="Q8CBY8"/>
    </source>
</evidence>
<evidence type="ECO:0000250" key="3">
    <source>
        <dbReference type="UniProtKB" id="Q9QUR2"/>
    </source>
</evidence>
<evidence type="ECO:0000255" key="4"/>
<evidence type="ECO:0000269" key="5">
    <source>
    </source>
</evidence>
<evidence type="ECO:0000269" key="6">
    <source>
    </source>
</evidence>
<evidence type="ECO:0000269" key="7">
    <source>
    </source>
</evidence>
<evidence type="ECO:0000269" key="8">
    <source>
    </source>
</evidence>
<evidence type="ECO:0000303" key="9">
    <source>
    </source>
</evidence>
<evidence type="ECO:0000305" key="10"/>
<evidence type="ECO:0000312" key="11">
    <source>
        <dbReference type="HGNC" id="HGNC:15518"/>
    </source>
</evidence>
<evidence type="ECO:0007744" key="12">
    <source>
    </source>
</evidence>
<evidence type="ECO:0007744" key="13">
    <source>
    </source>
</evidence>
<evidence type="ECO:0007744" key="14">
    <source>
    </source>
</evidence>
<evidence type="ECO:0007744" key="15">
    <source>
    </source>
</evidence>
<evidence type="ECO:0007744" key="16">
    <source>
    </source>
</evidence>
<sequence>MASLLQSDRVLYLVQGEKKVRAPLSQLYFCRYCSELRSLECVSHEVDSHYCPSCLENMPSAEAKLKKNRCANCFDCPGCMHTLSTRATSISTQLPDDPAKTTMKKAYYLACGFCRWTSRDVGMADKSVASGGWQEPENPHTQRMNKLIEYYQQLAQKEKVERDRKKLARRRNYMPLAFSDKYGLGTRLQRPRAGASISTLAGLSLKEGEDQKEIKIEPAQAVDEVEPLPEDYYTRPVNLTEVTTLQQRLLQPDFQPVCASQLYPRHKHLLIKRSLRCRKCEHNLSKPEFNPTSIKFKIQLVAVNYIPEVRIMSIPNLRYMKESQVLLTLTNPVENLTHVTLFECEEGDPDDINSTAKVVVPPKELVLAGKDAAAEYDELAEPQDFQDDPDIIAFRKANKVGIFIKVTPQREEGEVTVCFKMKHDFKNLAAPIRPIEESDQGTEVIWLTQHVELSLGPLLP</sequence>
<comment type="function">
    <text evidence="1">Part of the dynactin complex that activates the molecular motor dynein for ultra-processive transport along microtubules.</text>
</comment>
<comment type="subunit">
    <text evidence="1 2 8">Subunit of dynactin, a multiprotein complex part of a tripartite complex with dynein and a adapter, such as BICDL1, BICD2 or HOOK3. The dynactin complex is built around ACTR1A/ACTB filament and consists of an actin-related filament composed of a shoulder domain, a pointed end and a barbed end. Its length is defined by its flexible shoulder domain. The soulder is composed of 2 DCTN1 subunits, 4 DCTN2 and 2 DCTN3. The 4 DCNT2 (via N-terminus) bind the ACTR1A filament and act as molecular rulers to determine the length. The pointed end is important for binding dynein-dynactin cargo adapters. Consists of 4 subunits: ACTR10, DCNT4, DCTN5 and DCTN6. The barbed end is composed of a CAPZA1:CAPZB heterodimers, which binds ACTR1A/ACTB filament and dynactin and stabilizes dynactin (By similarity). Interacts with ATP7B, but not ATP7A, in a copper-dependent manner (PubMed:16554302). Interacts with ANK2; this interaction is required for localization at costameres (By similarity). Interacts with N4BP2L1 (By similarity).</text>
</comment>
<comment type="interaction">
    <interactant intactId="EBI-2134033">
        <id>Q9UJW0</id>
    </interactant>
    <interactant intactId="EBI-2559426">
        <id>Q9NZ32</id>
        <label>ACTR10</label>
    </interactant>
    <organismsDiffer>false</organismsDiffer>
    <experiments>3</experiments>
</comment>
<comment type="interaction">
    <interactant intactId="EBI-2134033">
        <id>Q9UJW0</id>
    </interactant>
    <interactant intactId="EBI-739580">
        <id>Q13137</id>
        <label>CALCOCO2</label>
    </interactant>
    <organismsDiffer>false</organismsDiffer>
    <experiments>3</experiments>
</comment>
<comment type="interaction">
    <interactant intactId="EBI-2134033">
        <id>Q9UJW0</id>
    </interactant>
    <interactant intactId="EBI-618309">
        <id>Q08379</id>
        <label>GOLGA2</label>
    </interactant>
    <organismsDiffer>false</organismsDiffer>
    <experiments>7</experiments>
</comment>
<comment type="interaction">
    <interactant intactId="EBI-2134033">
        <id>Q9UJW0</id>
    </interactant>
    <interactant intactId="EBI-466029">
        <id>P42858</id>
        <label>HTT</label>
    </interactant>
    <organismsDiffer>false</organismsDiffer>
    <experiments>3</experiments>
</comment>
<comment type="interaction">
    <interactant intactId="EBI-2134033">
        <id>Q9UJW0</id>
    </interactant>
    <interactant intactId="EBI-742948">
        <id>Q5JR59</id>
        <label>MTUS2</label>
    </interactant>
    <organismsDiffer>false</organismsDiffer>
    <experiments>4</experiments>
</comment>
<comment type="interaction">
    <interactant intactId="EBI-2134033">
        <id>Q9UJW0</id>
    </interactant>
    <interactant intactId="EBI-302345">
        <id>Q8ND90</id>
        <label>PNMA1</label>
    </interactant>
    <organismsDiffer>false</organismsDiffer>
    <experiments>3</experiments>
</comment>
<comment type="subcellular location">
    <subcellularLocation>
        <location evidence="5">Cytoplasm</location>
        <location evidence="5">Cytoskeleton</location>
    </subcellularLocation>
    <subcellularLocation>
        <location evidence="5">Cytoplasm</location>
        <location evidence="5">Cytoskeleton</location>
        <location evidence="5">Microtubule organizing center</location>
        <location evidence="5">Centrosome</location>
    </subcellularLocation>
    <subcellularLocation>
        <location evidence="3">Cytoplasm</location>
        <location evidence="3">Cytoskeleton</location>
        <location evidence="3">Stress fiber</location>
    </subcellularLocation>
    <subcellularLocation>
        <location evidence="3">Cytoplasm</location>
        <location evidence="3">Cell cortex</location>
    </subcellularLocation>
    <subcellularLocation>
        <location evidence="2">Cytoplasm</location>
        <location evidence="2">Myofibril</location>
        <location evidence="2">Sarcomere</location>
    </subcellularLocation>
    <text evidence="2 3 5">Has a punctate cytoplasmic distribution as well as centrosomal distribution typical of dynactin (PubMed:10671518). Overexpression in cultured mammalian cells revealed colocalization with cortical actin, stress fibers, and focal adhesion sites, sites of potential interaction between microtubules and the cell cortex (By similarity). In skeletal muscles, costamere localization requires the presence of ANK2 (By similarity).</text>
</comment>
<comment type="alternative products">
    <event type="alternative splicing"/>
    <isoform>
        <id>Q9UJW0-1</id>
        <name>1</name>
        <sequence type="displayed"/>
    </isoform>
    <isoform>
        <id>Q9UJW0-2</id>
        <name>2</name>
        <sequence type="described" ref="VSP_041306"/>
    </isoform>
    <isoform>
        <id>Q9UJW0-3</id>
        <name>3</name>
        <sequence type="described" ref="VSP_041307"/>
    </isoform>
</comment>
<comment type="similarity">
    <text evidence="10">Belongs to the dynactin subunit 4 family.</text>
</comment>
<feature type="initiator methionine" description="Removed" evidence="12 13 14">
    <location>
        <position position="1"/>
    </location>
</feature>
<feature type="chain" id="PRO_0000079823" description="Dynactin subunit 4">
    <location>
        <begin position="2"/>
        <end position="460"/>
    </location>
</feature>
<feature type="coiled-coil region" evidence="4">
    <location>
        <begin position="152"/>
        <end position="172"/>
    </location>
</feature>
<feature type="modified residue" description="N-acetylalanine" evidence="12 13 14">
    <location>
        <position position="2"/>
    </location>
</feature>
<feature type="modified residue" description="Phosphoserine" evidence="15">
    <location>
        <position position="196"/>
    </location>
</feature>
<feature type="modified residue" description="Phosphothreonine" evidence="3">
    <location>
        <position position="407"/>
    </location>
</feature>
<feature type="cross-link" description="Glycyl lysine isopeptide (Lys-Gly) (interchain with G-Cter in SUMO2)" evidence="16">
    <location>
        <position position="215"/>
    </location>
</feature>
<feature type="splice variant" id="VSP_041306" description="In isoform 2." evidence="9">
    <location>
        <begin position="1"/>
        <end position="57"/>
    </location>
</feature>
<feature type="splice variant" id="VSP_041307" description="In isoform 3." evidence="10">
    <original>S</original>
    <variation>SQHTIHVV</variation>
    <location>
        <position position="179"/>
    </location>
</feature>
<feature type="sequence variant" id="VAR_054037" description="In dbSNP:rs11550931." evidence="7">
    <original>P</original>
    <variation>T</variation>
    <location>
        <position position="95"/>
    </location>
</feature>
<feature type="sequence variant" id="VAR_033847" description="In dbSNP:rs35772018.">
    <original>Y</original>
    <variation>C</variation>
    <location>
        <position position="263"/>
    </location>
</feature>
<feature type="sequence variant" id="VAR_024336" description="In dbSNP:rs11954652." evidence="6">
    <original>F</original>
    <variation>L</variation>
    <location>
        <position position="342"/>
    </location>
</feature>
<feature type="sequence variant" id="VAR_024337" description="In dbSNP:rs3733923.">
    <original>S</original>
    <variation>N</variation>
    <location>
        <position position="438"/>
    </location>
</feature>
<feature type="mutagenesis site" description="Loss of ATP7B-binding; when associated with S-33; S-51; S-54; S-70, S-73; S-76; S-79; S-111; S-114; S-277 and S-280." evidence="8">
    <original>C</original>
    <variation>S</variation>
    <location>
        <position position="30"/>
    </location>
</feature>
<feature type="mutagenesis site" description="Loss of ATP7B-binding; when associated with S-30; S-51; S-54; S-70, S-73; S-76; S-79; S-111; S-114; S-277 and S-280." evidence="8">
    <original>C</original>
    <variation>S</variation>
    <location>
        <position position="33"/>
    </location>
</feature>
<feature type="mutagenesis site" description="Loss of ATP7B-binding; when associated with S-30; S-33; S-54; S-70, S-73; S-76; S-79; S-111; S-114; S-277 and S-280." evidence="8">
    <original>C</original>
    <variation>S</variation>
    <location>
        <position position="51"/>
    </location>
</feature>
<feature type="mutagenesis site" description="Loss of ATP7B-binding; when associated with S-30; S-33; S-51; S-70, S-73; S-76; S-79; S-111; S-114; S-277 and S-280." evidence="8">
    <original>C</original>
    <variation>S</variation>
    <location>
        <position position="54"/>
    </location>
</feature>
<feature type="mutagenesis site" description="Loss of ATP7B-binding; when associated with S-30; S-33; S-51; S-54, S-73; S-76; S-79; S-111; S-114; S-277 and S-280." evidence="8">
    <original>C</original>
    <variation>S</variation>
    <location>
        <position position="70"/>
    </location>
</feature>
<feature type="mutagenesis site" description="Loss of ATP7B-binding; when associated with S-30; S-33; S-51; S-54, S-70; S-76; S-79; S-111; S-114; S-277 and S-280." evidence="8">
    <original>C</original>
    <variation>S</variation>
    <location>
        <position position="73"/>
    </location>
</feature>
<feature type="mutagenesis site" description="Loss of ATP7B-binding; when associated with S-30; S-33; S-51; S-54, S-70; S-73; S-79; S-111; S-114; S-277 and S-280." evidence="8">
    <original>C</original>
    <variation>S</variation>
    <location>
        <position position="76"/>
    </location>
</feature>
<feature type="mutagenesis site" description="Loss of ATP7B-binding; when associated with S-30; S-33; S-51; S-54, S-70; S-73; S-76; S-111; S-114; S-277 and S-280." evidence="8">
    <original>C</original>
    <variation>S</variation>
    <location>
        <position position="79"/>
    </location>
</feature>
<feature type="mutagenesis site" description="Loss of ATP7B-binding; when associated with S-30; S-33; S-51; S-54, S-70; S-73; S-76; S-79; S-114; S-277 and S-280." evidence="8">
    <original>C</original>
    <variation>S</variation>
    <location>
        <position position="111"/>
    </location>
</feature>
<feature type="mutagenesis site" description="Loss of ATP7B-binding; when associated with S-30; S-33; S-51; S-54, S-70; S-73; S-76; S-79; S-111; S-277 and S-280." evidence="8">
    <original>C</original>
    <variation>S</variation>
    <location>
        <position position="114"/>
    </location>
</feature>
<feature type="mutagenesis site" description="Loss of ATP7B-binding; when associated with S-30; S-33; S-51; S-54, S-70; S-73; S-76; S-79; S-111; S-114 and S-280." evidence="8">
    <original>C</original>
    <variation>S</variation>
    <location>
        <position position="277"/>
    </location>
</feature>
<feature type="mutagenesis site" description="Loss of ATP7B-binding; when associated with S-30; S-33; S-51; S-54, S-70; S-73; S-76; S-79; S-111; S-114 and S-277." evidence="8">
    <original>C</original>
    <variation>S</variation>
    <location>
        <position position="280"/>
    </location>
</feature>
<accession>Q9UJW0</accession>
<accession>B3KWW0</accession>
<accession>D3DQH0</accession>
<accession>E5RGT5</accession>
<accession>Q8TAN8</accession>
<protein>
    <recommendedName>
        <fullName>Dynactin subunit 4</fullName>
        <shortName>Dyn4</shortName>
    </recommendedName>
    <alternativeName>
        <fullName>Dynactin subunit p62</fullName>
    </alternativeName>
</protein>
<organism>
    <name type="scientific">Homo sapiens</name>
    <name type="common">Human</name>
    <dbReference type="NCBI Taxonomy" id="9606"/>
    <lineage>
        <taxon>Eukaryota</taxon>
        <taxon>Metazoa</taxon>
        <taxon>Chordata</taxon>
        <taxon>Craniata</taxon>
        <taxon>Vertebrata</taxon>
        <taxon>Euteleostomi</taxon>
        <taxon>Mammalia</taxon>
        <taxon>Eutheria</taxon>
        <taxon>Euarchontoglires</taxon>
        <taxon>Primates</taxon>
        <taxon>Haplorrhini</taxon>
        <taxon>Catarrhini</taxon>
        <taxon>Hominidae</taxon>
        <taxon>Homo</taxon>
    </lineage>
</organism>